<dbReference type="EMBL" id="CP000482">
    <property type="protein sequence ID" value="ABK98328.1"/>
    <property type="molecule type" value="Genomic_DNA"/>
</dbReference>
<dbReference type="RefSeq" id="WP_011734640.1">
    <property type="nucleotide sequence ID" value="NC_008609.1"/>
</dbReference>
<dbReference type="SMR" id="A1ALV8"/>
<dbReference type="STRING" id="338966.Ppro_0697"/>
<dbReference type="KEGG" id="ppd:Ppro_0697"/>
<dbReference type="eggNOG" id="COG0098">
    <property type="taxonomic scope" value="Bacteria"/>
</dbReference>
<dbReference type="HOGENOM" id="CLU_065898_2_2_7"/>
<dbReference type="OrthoDB" id="9809045at2"/>
<dbReference type="Proteomes" id="UP000006732">
    <property type="component" value="Chromosome"/>
</dbReference>
<dbReference type="GO" id="GO:0015935">
    <property type="term" value="C:small ribosomal subunit"/>
    <property type="evidence" value="ECO:0007669"/>
    <property type="project" value="InterPro"/>
</dbReference>
<dbReference type="GO" id="GO:0019843">
    <property type="term" value="F:rRNA binding"/>
    <property type="evidence" value="ECO:0007669"/>
    <property type="project" value="UniProtKB-UniRule"/>
</dbReference>
<dbReference type="GO" id="GO:0003735">
    <property type="term" value="F:structural constituent of ribosome"/>
    <property type="evidence" value="ECO:0007669"/>
    <property type="project" value="InterPro"/>
</dbReference>
<dbReference type="GO" id="GO:0006412">
    <property type="term" value="P:translation"/>
    <property type="evidence" value="ECO:0007669"/>
    <property type="project" value="UniProtKB-UniRule"/>
</dbReference>
<dbReference type="FunFam" id="3.30.160.20:FF:000001">
    <property type="entry name" value="30S ribosomal protein S5"/>
    <property type="match status" value="1"/>
</dbReference>
<dbReference type="FunFam" id="3.30.230.10:FF:000002">
    <property type="entry name" value="30S ribosomal protein S5"/>
    <property type="match status" value="1"/>
</dbReference>
<dbReference type="Gene3D" id="3.30.160.20">
    <property type="match status" value="1"/>
</dbReference>
<dbReference type="Gene3D" id="3.30.230.10">
    <property type="match status" value="1"/>
</dbReference>
<dbReference type="HAMAP" id="MF_01307_B">
    <property type="entry name" value="Ribosomal_uS5_B"/>
    <property type="match status" value="1"/>
</dbReference>
<dbReference type="InterPro" id="IPR020568">
    <property type="entry name" value="Ribosomal_Su5_D2-typ_SF"/>
</dbReference>
<dbReference type="InterPro" id="IPR000851">
    <property type="entry name" value="Ribosomal_uS5"/>
</dbReference>
<dbReference type="InterPro" id="IPR005712">
    <property type="entry name" value="Ribosomal_uS5_bac-type"/>
</dbReference>
<dbReference type="InterPro" id="IPR005324">
    <property type="entry name" value="Ribosomal_uS5_C"/>
</dbReference>
<dbReference type="InterPro" id="IPR013810">
    <property type="entry name" value="Ribosomal_uS5_N"/>
</dbReference>
<dbReference type="InterPro" id="IPR018192">
    <property type="entry name" value="Ribosomal_uS5_N_CS"/>
</dbReference>
<dbReference type="InterPro" id="IPR014721">
    <property type="entry name" value="Ribsml_uS5_D2-typ_fold_subgr"/>
</dbReference>
<dbReference type="NCBIfam" id="TIGR01021">
    <property type="entry name" value="rpsE_bact"/>
    <property type="match status" value="1"/>
</dbReference>
<dbReference type="PANTHER" id="PTHR48277">
    <property type="entry name" value="MITOCHONDRIAL RIBOSOMAL PROTEIN S5"/>
    <property type="match status" value="1"/>
</dbReference>
<dbReference type="PANTHER" id="PTHR48277:SF1">
    <property type="entry name" value="MITOCHONDRIAL RIBOSOMAL PROTEIN S5"/>
    <property type="match status" value="1"/>
</dbReference>
<dbReference type="Pfam" id="PF00333">
    <property type="entry name" value="Ribosomal_S5"/>
    <property type="match status" value="1"/>
</dbReference>
<dbReference type="Pfam" id="PF03719">
    <property type="entry name" value="Ribosomal_S5_C"/>
    <property type="match status" value="1"/>
</dbReference>
<dbReference type="SUPFAM" id="SSF54768">
    <property type="entry name" value="dsRNA-binding domain-like"/>
    <property type="match status" value="1"/>
</dbReference>
<dbReference type="SUPFAM" id="SSF54211">
    <property type="entry name" value="Ribosomal protein S5 domain 2-like"/>
    <property type="match status" value="1"/>
</dbReference>
<dbReference type="PROSITE" id="PS00585">
    <property type="entry name" value="RIBOSOMAL_S5"/>
    <property type="match status" value="1"/>
</dbReference>
<dbReference type="PROSITE" id="PS50881">
    <property type="entry name" value="S5_DSRBD"/>
    <property type="match status" value="1"/>
</dbReference>
<gene>
    <name evidence="1" type="primary">rpsE</name>
    <name type="ordered locus">Ppro_0697</name>
</gene>
<comment type="function">
    <text evidence="1">With S4 and S12 plays an important role in translational accuracy.</text>
</comment>
<comment type="function">
    <text evidence="1">Located at the back of the 30S subunit body where it stabilizes the conformation of the head with respect to the body.</text>
</comment>
<comment type="subunit">
    <text evidence="1">Part of the 30S ribosomal subunit. Contacts proteins S4 and S8.</text>
</comment>
<comment type="domain">
    <text>The N-terminal domain interacts with the head of the 30S subunit; the C-terminal domain interacts with the body and contacts protein S4. The interaction surface between S4 and S5 is involved in control of translational fidelity.</text>
</comment>
<comment type="similarity">
    <text evidence="1">Belongs to the universal ribosomal protein uS5 family.</text>
</comment>
<protein>
    <recommendedName>
        <fullName evidence="1">Small ribosomal subunit protein uS5</fullName>
    </recommendedName>
    <alternativeName>
        <fullName evidence="2">30S ribosomal protein S5</fullName>
    </alternativeName>
</protein>
<organism>
    <name type="scientific">Pelobacter propionicus (strain DSM 2379 / NBRC 103807 / OttBd1)</name>
    <dbReference type="NCBI Taxonomy" id="338966"/>
    <lineage>
        <taxon>Bacteria</taxon>
        <taxon>Pseudomonadati</taxon>
        <taxon>Thermodesulfobacteriota</taxon>
        <taxon>Desulfuromonadia</taxon>
        <taxon>Desulfuromonadales</taxon>
        <taxon>Desulfuromonadaceae</taxon>
        <taxon>Pelobacter</taxon>
    </lineage>
</organism>
<feature type="chain" id="PRO_0000323167" description="Small ribosomal subunit protein uS5">
    <location>
        <begin position="1"/>
        <end position="162"/>
    </location>
</feature>
<feature type="domain" description="S5 DRBM" evidence="1">
    <location>
        <begin position="11"/>
        <end position="74"/>
    </location>
</feature>
<evidence type="ECO:0000255" key="1">
    <source>
        <dbReference type="HAMAP-Rule" id="MF_01307"/>
    </source>
</evidence>
<evidence type="ECO:0000305" key="2"/>
<reference key="1">
    <citation type="submission" date="2006-10" db="EMBL/GenBank/DDBJ databases">
        <title>Complete sequence of chromosome of Pelobacter propionicus DSM 2379.</title>
        <authorList>
            <consortium name="US DOE Joint Genome Institute"/>
            <person name="Copeland A."/>
            <person name="Lucas S."/>
            <person name="Lapidus A."/>
            <person name="Barry K."/>
            <person name="Detter J.C."/>
            <person name="Glavina del Rio T."/>
            <person name="Hammon N."/>
            <person name="Israni S."/>
            <person name="Dalin E."/>
            <person name="Tice H."/>
            <person name="Pitluck S."/>
            <person name="Saunders E."/>
            <person name="Brettin T."/>
            <person name="Bruce D."/>
            <person name="Han C."/>
            <person name="Tapia R."/>
            <person name="Schmutz J."/>
            <person name="Larimer F."/>
            <person name="Land M."/>
            <person name="Hauser L."/>
            <person name="Kyrpides N."/>
            <person name="Kim E."/>
            <person name="Lovley D."/>
            <person name="Richardson P."/>
        </authorList>
    </citation>
    <scope>NUCLEOTIDE SEQUENCE [LARGE SCALE GENOMIC DNA]</scope>
    <source>
        <strain>DSM 2379 / NBRC 103807 / OttBd1</strain>
    </source>
</reference>
<sequence length="162" mass="17034">MSRVNPADLNLTDRVVHISRVAKVVKGGRRFSFSALIVVGDGCGYVGYGLGKANEVPEAIRKGVEQAKKNLIKVPVNQNQTIPFEIEGKFGAGRLLMKPASAGTGVIAGGAARAIFEAAGINNILSKCLGSNNPHNVVKAAFAGLQRLKSPEELAARRGITE</sequence>
<keyword id="KW-1185">Reference proteome</keyword>
<keyword id="KW-0687">Ribonucleoprotein</keyword>
<keyword id="KW-0689">Ribosomal protein</keyword>
<keyword id="KW-0694">RNA-binding</keyword>
<keyword id="KW-0699">rRNA-binding</keyword>
<name>RS5_PELPD</name>
<accession>A1ALV8</accession>
<proteinExistence type="inferred from homology"/>